<proteinExistence type="uncertain"/>
<dbReference type="EMBL" id="Z67750">
    <property type="protein sequence ID" value="CAA91584.1"/>
    <property type="molecule type" value="Genomic_DNA"/>
</dbReference>
<dbReference type="EMBL" id="Z74210">
    <property type="protein sequence ID" value="CAA98735.1"/>
    <property type="molecule type" value="Genomic_DNA"/>
</dbReference>
<dbReference type="PIR" id="S61051">
    <property type="entry name" value="S61051"/>
</dbReference>
<dbReference type="DIP" id="DIP-4884N"/>
<dbReference type="IntAct" id="Q12307">
    <property type="interactions" value="2"/>
</dbReference>
<dbReference type="STRING" id="4932.YDL162C"/>
<dbReference type="PaxDb" id="4932-YDL162C"/>
<dbReference type="EnsemblFungi" id="YDL162C_mRNA">
    <property type="protein sequence ID" value="YDL162C"/>
    <property type="gene ID" value="YDL162C"/>
</dbReference>
<dbReference type="AGR" id="SGD:S000002321"/>
<dbReference type="SGD" id="S000002321">
    <property type="gene designation" value="YDL162C"/>
</dbReference>
<dbReference type="HOGENOM" id="CLU_2075000_0_0_1"/>
<sequence>MIVLPLAPFPSDPGTHTNGSFFYFLKLLFVIERNFHHYPDDSLYVATISDNHTSKIKYFEQHKAPPTFRKTCNRNSYCSRWFYCCLTLSSFCSLRCVPPLEMADGIFHLNAKTRESEI</sequence>
<evidence type="ECO:0000305" key="1"/>
<evidence type="ECO:0000305" key="2">
    <source>
    </source>
</evidence>
<protein>
    <recommendedName>
        <fullName>Putative uncharacterized protein YDL162C</fullName>
    </recommendedName>
</protein>
<feature type="chain" id="PRO_0000299860" description="Putative uncharacterized protein YDL162C">
    <location>
        <begin position="1"/>
        <end position="118"/>
    </location>
</feature>
<name>YD162_YEAST</name>
<organism>
    <name type="scientific">Saccharomyces cerevisiae (strain ATCC 204508 / S288c)</name>
    <name type="common">Baker's yeast</name>
    <dbReference type="NCBI Taxonomy" id="559292"/>
    <lineage>
        <taxon>Eukaryota</taxon>
        <taxon>Fungi</taxon>
        <taxon>Dikarya</taxon>
        <taxon>Ascomycota</taxon>
        <taxon>Saccharomycotina</taxon>
        <taxon>Saccharomycetes</taxon>
        <taxon>Saccharomycetales</taxon>
        <taxon>Saccharomycetaceae</taxon>
        <taxon>Saccharomyces</taxon>
    </lineage>
</organism>
<accession>Q12307</accession>
<reference key="1">
    <citation type="journal article" date="1997" name="Nature">
        <title>The nucleotide sequence of Saccharomyces cerevisiae chromosome IV.</title>
        <authorList>
            <person name="Jacq C."/>
            <person name="Alt-Moerbe J."/>
            <person name="Andre B."/>
            <person name="Arnold W."/>
            <person name="Bahr A."/>
            <person name="Ballesta J.P.G."/>
            <person name="Bargues M."/>
            <person name="Baron L."/>
            <person name="Becker A."/>
            <person name="Biteau N."/>
            <person name="Bloecker H."/>
            <person name="Blugeon C."/>
            <person name="Boskovic J."/>
            <person name="Brandt P."/>
            <person name="Brueckner M."/>
            <person name="Buitrago M.J."/>
            <person name="Coster F."/>
            <person name="Delaveau T."/>
            <person name="del Rey F."/>
            <person name="Dujon B."/>
            <person name="Eide L.G."/>
            <person name="Garcia-Cantalejo J.M."/>
            <person name="Goffeau A."/>
            <person name="Gomez-Peris A."/>
            <person name="Granotier C."/>
            <person name="Hanemann V."/>
            <person name="Hankeln T."/>
            <person name="Hoheisel J.D."/>
            <person name="Jaeger W."/>
            <person name="Jimenez A."/>
            <person name="Jonniaux J.-L."/>
            <person name="Kraemer C."/>
            <person name="Kuester H."/>
            <person name="Laamanen P."/>
            <person name="Legros Y."/>
            <person name="Louis E.J."/>
            <person name="Moeller-Rieker S."/>
            <person name="Monnet A."/>
            <person name="Moro M."/>
            <person name="Mueller-Auer S."/>
            <person name="Nussbaumer B."/>
            <person name="Paricio N."/>
            <person name="Paulin L."/>
            <person name="Perea J."/>
            <person name="Perez-Alonso M."/>
            <person name="Perez-Ortin J.E."/>
            <person name="Pohl T.M."/>
            <person name="Prydz H."/>
            <person name="Purnelle B."/>
            <person name="Rasmussen S.W."/>
            <person name="Remacha M.A."/>
            <person name="Revuelta J.L."/>
            <person name="Rieger M."/>
            <person name="Salom D."/>
            <person name="Saluz H.P."/>
            <person name="Saiz J.E."/>
            <person name="Saren A.-M."/>
            <person name="Schaefer M."/>
            <person name="Scharfe M."/>
            <person name="Schmidt E.R."/>
            <person name="Schneider C."/>
            <person name="Scholler P."/>
            <person name="Schwarz S."/>
            <person name="Soler-Mira A."/>
            <person name="Urrestarazu L.A."/>
            <person name="Verhasselt P."/>
            <person name="Vissers S."/>
            <person name="Voet M."/>
            <person name="Volckaert G."/>
            <person name="Wagner G."/>
            <person name="Wambutt R."/>
            <person name="Wedler E."/>
            <person name="Wedler H."/>
            <person name="Woelfl S."/>
            <person name="Harris D.E."/>
            <person name="Bowman S."/>
            <person name="Brown D."/>
            <person name="Churcher C.M."/>
            <person name="Connor R."/>
            <person name="Dedman K."/>
            <person name="Gentles S."/>
            <person name="Hamlin N."/>
            <person name="Hunt S."/>
            <person name="Jones L."/>
            <person name="McDonald S."/>
            <person name="Murphy L.D."/>
            <person name="Niblett D."/>
            <person name="Odell C."/>
            <person name="Oliver K."/>
            <person name="Rajandream M.A."/>
            <person name="Richards C."/>
            <person name="Shore L."/>
            <person name="Walsh S.V."/>
            <person name="Barrell B.G."/>
            <person name="Dietrich F.S."/>
            <person name="Mulligan J.T."/>
            <person name="Allen E."/>
            <person name="Araujo R."/>
            <person name="Aviles E."/>
            <person name="Berno A."/>
            <person name="Carpenter J."/>
            <person name="Chen E."/>
            <person name="Cherry J.M."/>
            <person name="Chung E."/>
            <person name="Duncan M."/>
            <person name="Hunicke-Smith S."/>
            <person name="Hyman R.W."/>
            <person name="Komp C."/>
            <person name="Lashkari D."/>
            <person name="Lew H."/>
            <person name="Lin D."/>
            <person name="Mosedale D."/>
            <person name="Nakahara K."/>
            <person name="Namath A."/>
            <person name="Oefner P."/>
            <person name="Oh C."/>
            <person name="Petel F.X."/>
            <person name="Roberts D."/>
            <person name="Schramm S."/>
            <person name="Schroeder M."/>
            <person name="Shogren T."/>
            <person name="Shroff N."/>
            <person name="Winant A."/>
            <person name="Yelton M.A."/>
            <person name="Botstein D."/>
            <person name="Davis R.W."/>
            <person name="Johnston M."/>
            <person name="Andrews S."/>
            <person name="Brinkman R."/>
            <person name="Cooper J."/>
            <person name="Ding H."/>
            <person name="Du Z."/>
            <person name="Favello A."/>
            <person name="Fulton L."/>
            <person name="Gattung S."/>
            <person name="Greco T."/>
            <person name="Hallsworth K."/>
            <person name="Hawkins J."/>
            <person name="Hillier L.W."/>
            <person name="Jier M."/>
            <person name="Johnson D."/>
            <person name="Johnston L."/>
            <person name="Kirsten J."/>
            <person name="Kucaba T."/>
            <person name="Langston Y."/>
            <person name="Latreille P."/>
            <person name="Le T."/>
            <person name="Mardis E."/>
            <person name="Menezes S."/>
            <person name="Miller N."/>
            <person name="Nhan M."/>
            <person name="Pauley A."/>
            <person name="Peluso D."/>
            <person name="Rifkin L."/>
            <person name="Riles L."/>
            <person name="Taich A."/>
            <person name="Trevaskis E."/>
            <person name="Vignati D."/>
            <person name="Wilcox L."/>
            <person name="Wohldman P."/>
            <person name="Vaudin M."/>
            <person name="Wilson R."/>
            <person name="Waterston R."/>
            <person name="Albermann K."/>
            <person name="Hani J."/>
            <person name="Heumann K."/>
            <person name="Kleine K."/>
            <person name="Mewes H.-W."/>
            <person name="Zollner A."/>
            <person name="Zaccaria P."/>
        </authorList>
    </citation>
    <scope>NUCLEOTIDE SEQUENCE [LARGE SCALE GENOMIC DNA]</scope>
    <source>
        <strain>ATCC 204508 / S288c</strain>
    </source>
</reference>
<reference key="2">
    <citation type="journal article" date="2014" name="G3 (Bethesda)">
        <title>The reference genome sequence of Saccharomyces cerevisiae: Then and now.</title>
        <authorList>
            <person name="Engel S.R."/>
            <person name="Dietrich F.S."/>
            <person name="Fisk D.G."/>
            <person name="Binkley G."/>
            <person name="Balakrishnan R."/>
            <person name="Costanzo M.C."/>
            <person name="Dwight S.S."/>
            <person name="Hitz B.C."/>
            <person name="Karra K."/>
            <person name="Nash R.S."/>
            <person name="Weng S."/>
            <person name="Wong E.D."/>
            <person name="Lloyd P."/>
            <person name="Skrzypek M.S."/>
            <person name="Miyasato S.R."/>
            <person name="Simison M."/>
            <person name="Cherry J.M."/>
        </authorList>
    </citation>
    <scope>GENOME REANNOTATION</scope>
    <source>
        <strain>ATCC 204508 / S288c</strain>
    </source>
</reference>
<gene>
    <name type="ordered locus">YDL162C</name>
</gene>
<comment type="miscellaneous">
    <text evidence="1">Partially overlaps ENT1.</text>
</comment>
<comment type="caution">
    <text evidence="2">Product of a dubious gene prediction unlikely to encode a functional protein. Because of that it is not part of the S.cerevisiae S288c complete/reference proteome set.</text>
</comment>